<accession>Q87T92</accession>
<organism>
    <name type="scientific">Vibrio parahaemolyticus serotype O3:K6 (strain RIMD 2210633)</name>
    <dbReference type="NCBI Taxonomy" id="223926"/>
    <lineage>
        <taxon>Bacteria</taxon>
        <taxon>Pseudomonadati</taxon>
        <taxon>Pseudomonadota</taxon>
        <taxon>Gammaproteobacteria</taxon>
        <taxon>Vibrionales</taxon>
        <taxon>Vibrionaceae</taxon>
        <taxon>Vibrio</taxon>
    </lineage>
</organism>
<keyword id="KW-0328">Glycosyltransferase</keyword>
<keyword id="KW-0460">Magnesium</keyword>
<keyword id="KW-0665">Pyrimidine biosynthesis</keyword>
<keyword id="KW-0808">Transferase</keyword>
<name>PYRE_VIBPA</name>
<protein>
    <recommendedName>
        <fullName evidence="1">Orotate phosphoribosyltransferase</fullName>
        <shortName evidence="1">OPRT</shortName>
        <shortName evidence="1">OPRTase</shortName>
        <ecNumber evidence="1">2.4.2.10</ecNumber>
    </recommendedName>
</protein>
<gene>
    <name evidence="1" type="primary">pyrE</name>
    <name type="ordered locus">VP0178</name>
</gene>
<comment type="function">
    <text evidence="1">Catalyzes the transfer of a ribosyl phosphate group from 5-phosphoribose 1-diphosphate to orotate, leading to the formation of orotidine monophosphate (OMP).</text>
</comment>
<comment type="catalytic activity">
    <reaction evidence="1">
        <text>orotidine 5'-phosphate + diphosphate = orotate + 5-phospho-alpha-D-ribose 1-diphosphate</text>
        <dbReference type="Rhea" id="RHEA:10380"/>
        <dbReference type="ChEBI" id="CHEBI:30839"/>
        <dbReference type="ChEBI" id="CHEBI:33019"/>
        <dbReference type="ChEBI" id="CHEBI:57538"/>
        <dbReference type="ChEBI" id="CHEBI:58017"/>
        <dbReference type="EC" id="2.4.2.10"/>
    </reaction>
</comment>
<comment type="cofactor">
    <cofactor evidence="1">
        <name>Mg(2+)</name>
        <dbReference type="ChEBI" id="CHEBI:18420"/>
    </cofactor>
</comment>
<comment type="pathway">
    <text evidence="1">Pyrimidine metabolism; UMP biosynthesis via de novo pathway; UMP from orotate: step 1/2.</text>
</comment>
<comment type="subunit">
    <text evidence="1">Homodimer.</text>
</comment>
<comment type="similarity">
    <text evidence="1">Belongs to the purine/pyrimidine phosphoribosyltransferase family. PyrE subfamily.</text>
</comment>
<evidence type="ECO:0000255" key="1">
    <source>
        <dbReference type="HAMAP-Rule" id="MF_01208"/>
    </source>
</evidence>
<dbReference type="EC" id="2.4.2.10" evidence="1"/>
<dbReference type="EMBL" id="BA000031">
    <property type="protein sequence ID" value="BAC58441.1"/>
    <property type="molecule type" value="Genomic_DNA"/>
</dbReference>
<dbReference type="RefSeq" id="NP_796557.1">
    <property type="nucleotide sequence ID" value="NC_004603.1"/>
</dbReference>
<dbReference type="RefSeq" id="WP_005458955.1">
    <property type="nucleotide sequence ID" value="NC_004603.1"/>
</dbReference>
<dbReference type="SMR" id="Q87T92"/>
<dbReference type="GeneID" id="1187645"/>
<dbReference type="KEGG" id="vpa:VP0178"/>
<dbReference type="PATRIC" id="fig|223926.6.peg.171"/>
<dbReference type="eggNOG" id="COG0461">
    <property type="taxonomic scope" value="Bacteria"/>
</dbReference>
<dbReference type="HOGENOM" id="CLU_074878_0_1_6"/>
<dbReference type="UniPathway" id="UPA00070">
    <property type="reaction ID" value="UER00119"/>
</dbReference>
<dbReference type="Proteomes" id="UP000002493">
    <property type="component" value="Chromosome 1"/>
</dbReference>
<dbReference type="GO" id="GO:0005737">
    <property type="term" value="C:cytoplasm"/>
    <property type="evidence" value="ECO:0007669"/>
    <property type="project" value="TreeGrafter"/>
</dbReference>
<dbReference type="GO" id="GO:0000287">
    <property type="term" value="F:magnesium ion binding"/>
    <property type="evidence" value="ECO:0007669"/>
    <property type="project" value="UniProtKB-UniRule"/>
</dbReference>
<dbReference type="GO" id="GO:0004588">
    <property type="term" value="F:orotate phosphoribosyltransferase activity"/>
    <property type="evidence" value="ECO:0007669"/>
    <property type="project" value="UniProtKB-UniRule"/>
</dbReference>
<dbReference type="GO" id="GO:0006207">
    <property type="term" value="P:'de novo' pyrimidine nucleobase biosynthetic process"/>
    <property type="evidence" value="ECO:0007669"/>
    <property type="project" value="TreeGrafter"/>
</dbReference>
<dbReference type="GO" id="GO:0044205">
    <property type="term" value="P:'de novo' UMP biosynthetic process"/>
    <property type="evidence" value="ECO:0007669"/>
    <property type="project" value="UniProtKB-UniRule"/>
</dbReference>
<dbReference type="GO" id="GO:0046132">
    <property type="term" value="P:pyrimidine ribonucleoside biosynthetic process"/>
    <property type="evidence" value="ECO:0007669"/>
    <property type="project" value="TreeGrafter"/>
</dbReference>
<dbReference type="CDD" id="cd06223">
    <property type="entry name" value="PRTases_typeI"/>
    <property type="match status" value="1"/>
</dbReference>
<dbReference type="FunFam" id="3.40.50.2020:FF:000008">
    <property type="entry name" value="Orotate phosphoribosyltransferase"/>
    <property type="match status" value="1"/>
</dbReference>
<dbReference type="Gene3D" id="3.40.50.2020">
    <property type="match status" value="1"/>
</dbReference>
<dbReference type="HAMAP" id="MF_01208">
    <property type="entry name" value="PyrE"/>
    <property type="match status" value="1"/>
</dbReference>
<dbReference type="InterPro" id="IPR023031">
    <property type="entry name" value="OPRT"/>
</dbReference>
<dbReference type="InterPro" id="IPR004467">
    <property type="entry name" value="Or_phspho_trans_dom"/>
</dbReference>
<dbReference type="InterPro" id="IPR000836">
    <property type="entry name" value="PRibTrfase_dom"/>
</dbReference>
<dbReference type="InterPro" id="IPR029057">
    <property type="entry name" value="PRTase-like"/>
</dbReference>
<dbReference type="NCBIfam" id="TIGR00336">
    <property type="entry name" value="pyrE"/>
    <property type="match status" value="1"/>
</dbReference>
<dbReference type="PANTHER" id="PTHR46683">
    <property type="entry name" value="OROTATE PHOSPHORIBOSYLTRANSFERASE 1-RELATED"/>
    <property type="match status" value="1"/>
</dbReference>
<dbReference type="PANTHER" id="PTHR46683:SF1">
    <property type="entry name" value="OROTATE PHOSPHORIBOSYLTRANSFERASE 1-RELATED"/>
    <property type="match status" value="1"/>
</dbReference>
<dbReference type="Pfam" id="PF00156">
    <property type="entry name" value="Pribosyltran"/>
    <property type="match status" value="1"/>
</dbReference>
<dbReference type="SUPFAM" id="SSF53271">
    <property type="entry name" value="PRTase-like"/>
    <property type="match status" value="1"/>
</dbReference>
<dbReference type="PROSITE" id="PS00103">
    <property type="entry name" value="PUR_PYR_PR_TRANSFER"/>
    <property type="match status" value="1"/>
</dbReference>
<feature type="chain" id="PRO_0000110766" description="Orotate phosphoribosyltransferase">
    <location>
        <begin position="1"/>
        <end position="213"/>
    </location>
</feature>
<feature type="binding site" description="in other chain" evidence="1">
    <location>
        <position position="26"/>
    </location>
    <ligand>
        <name>5-phospho-alpha-D-ribose 1-diphosphate</name>
        <dbReference type="ChEBI" id="CHEBI:58017"/>
        <note>ligand shared between dimeric partners</note>
    </ligand>
</feature>
<feature type="binding site" evidence="1">
    <location>
        <begin position="34"/>
        <end position="35"/>
    </location>
    <ligand>
        <name>orotate</name>
        <dbReference type="ChEBI" id="CHEBI:30839"/>
    </ligand>
</feature>
<feature type="binding site" description="in other chain" evidence="1">
    <location>
        <begin position="72"/>
        <end position="73"/>
    </location>
    <ligand>
        <name>5-phospho-alpha-D-ribose 1-diphosphate</name>
        <dbReference type="ChEBI" id="CHEBI:58017"/>
        <note>ligand shared between dimeric partners</note>
    </ligand>
</feature>
<feature type="binding site" evidence="1">
    <location>
        <position position="99"/>
    </location>
    <ligand>
        <name>5-phospho-alpha-D-ribose 1-diphosphate</name>
        <dbReference type="ChEBI" id="CHEBI:58017"/>
        <note>ligand shared between dimeric partners</note>
    </ligand>
</feature>
<feature type="binding site" description="in other chain" evidence="1">
    <location>
        <position position="100"/>
    </location>
    <ligand>
        <name>5-phospho-alpha-D-ribose 1-diphosphate</name>
        <dbReference type="ChEBI" id="CHEBI:58017"/>
        <note>ligand shared between dimeric partners</note>
    </ligand>
</feature>
<feature type="binding site" evidence="1">
    <location>
        <position position="103"/>
    </location>
    <ligand>
        <name>5-phospho-alpha-D-ribose 1-diphosphate</name>
        <dbReference type="ChEBI" id="CHEBI:58017"/>
        <note>ligand shared between dimeric partners</note>
    </ligand>
</feature>
<feature type="binding site" evidence="1">
    <location>
        <position position="105"/>
    </location>
    <ligand>
        <name>5-phospho-alpha-D-ribose 1-diphosphate</name>
        <dbReference type="ChEBI" id="CHEBI:58017"/>
        <note>ligand shared between dimeric partners</note>
    </ligand>
</feature>
<feature type="binding site" description="in other chain" evidence="1">
    <location>
        <begin position="124"/>
        <end position="132"/>
    </location>
    <ligand>
        <name>5-phospho-alpha-D-ribose 1-diphosphate</name>
        <dbReference type="ChEBI" id="CHEBI:58017"/>
        <note>ligand shared between dimeric partners</note>
    </ligand>
</feature>
<feature type="binding site" evidence="1">
    <location>
        <position position="128"/>
    </location>
    <ligand>
        <name>orotate</name>
        <dbReference type="ChEBI" id="CHEBI:30839"/>
    </ligand>
</feature>
<feature type="binding site" evidence="1">
    <location>
        <position position="156"/>
    </location>
    <ligand>
        <name>orotate</name>
        <dbReference type="ChEBI" id="CHEBI:30839"/>
    </ligand>
</feature>
<proteinExistence type="inferred from homology"/>
<sequence>MKAYQREFIEFALEKEVLKFGEFTLKSGRKSPYFFNAGLFNTGRDLARLGRFYAAALADSGIEFDVLFGPAYKGIPIATTTAVALADHHDIDTPYCFNRKEAKNHGEGGNLVGSALEGRIMLVDDVITAGTAIRESMEIIKANGADLAGVLVAIDRQEKGKGELSAIQEVERDFGCAVISIVSLGDLITYLEEKGNATEHLEAVKAYRAEYGI</sequence>
<reference key="1">
    <citation type="journal article" date="2003" name="Lancet">
        <title>Genome sequence of Vibrio parahaemolyticus: a pathogenic mechanism distinct from that of V. cholerae.</title>
        <authorList>
            <person name="Makino K."/>
            <person name="Oshima K."/>
            <person name="Kurokawa K."/>
            <person name="Yokoyama K."/>
            <person name="Uda T."/>
            <person name="Tagomori K."/>
            <person name="Iijima Y."/>
            <person name="Najima M."/>
            <person name="Nakano M."/>
            <person name="Yamashita A."/>
            <person name="Kubota Y."/>
            <person name="Kimura S."/>
            <person name="Yasunaga T."/>
            <person name="Honda T."/>
            <person name="Shinagawa H."/>
            <person name="Hattori M."/>
            <person name="Iida T."/>
        </authorList>
    </citation>
    <scope>NUCLEOTIDE SEQUENCE [LARGE SCALE GENOMIC DNA]</scope>
    <source>
        <strain>RIMD 2210633</strain>
    </source>
</reference>